<reference key="1">
    <citation type="journal article" date="1986" name="J. Gen. Microbiol.">
        <title>Molecular cloning and nucleotide sequence of the alkaline cellulase gene from the alkalophilic Bacillus sp. strain 1139.</title>
        <authorList>
            <person name="Fukumori F."/>
            <person name="Kudo T."/>
            <person name="Narahashi Y."/>
            <person name="Horikoshi K."/>
        </authorList>
    </citation>
    <scope>NUCLEOTIDE SEQUENCE [GENOMIC DNA]</scope>
</reference>
<feature type="signal peptide" evidence="2">
    <location>
        <begin position="1"/>
        <end position="30"/>
    </location>
</feature>
<feature type="chain" id="PRO_0000007837" description="Endoglucanase">
    <location>
        <begin position="31"/>
        <end position="800"/>
    </location>
</feature>
<feature type="region of interest" description="Disordered" evidence="3">
    <location>
        <begin position="761"/>
        <end position="800"/>
    </location>
</feature>
<feature type="compositionally biased region" description="Acidic residues" evidence="3">
    <location>
        <begin position="767"/>
        <end position="780"/>
    </location>
</feature>
<feature type="compositionally biased region" description="Basic and acidic residues" evidence="3">
    <location>
        <begin position="781"/>
        <end position="800"/>
    </location>
</feature>
<feature type="active site" description="Proton donor" evidence="1">
    <location>
        <position position="190"/>
    </location>
</feature>
<feature type="active site" description="Nucleophile" evidence="1">
    <location>
        <position position="305"/>
    </location>
</feature>
<feature type="strand" evidence="5">
    <location>
        <begin position="588"/>
        <end position="590"/>
    </location>
</feature>
<feature type="strand" evidence="5">
    <location>
        <begin position="594"/>
        <end position="596"/>
    </location>
</feature>
<feature type="strand" evidence="5">
    <location>
        <begin position="600"/>
        <end position="602"/>
    </location>
</feature>
<feature type="strand" evidence="5">
    <location>
        <begin position="613"/>
        <end position="617"/>
    </location>
</feature>
<feature type="strand" evidence="5">
    <location>
        <begin position="620"/>
        <end position="628"/>
    </location>
</feature>
<feature type="turn" evidence="5">
    <location>
        <begin position="637"/>
        <end position="640"/>
    </location>
</feature>
<feature type="strand" evidence="5">
    <location>
        <begin position="643"/>
        <end position="647"/>
    </location>
</feature>
<feature type="strand" evidence="5">
    <location>
        <begin position="658"/>
        <end position="669"/>
    </location>
</feature>
<feature type="strand" evidence="5">
    <location>
        <begin position="674"/>
        <end position="681"/>
    </location>
</feature>
<feature type="helix" evidence="5">
    <location>
        <begin position="684"/>
        <end position="686"/>
    </location>
</feature>
<feature type="strand" evidence="5">
    <location>
        <begin position="696"/>
        <end position="699"/>
    </location>
</feature>
<feature type="helix" evidence="5">
    <location>
        <begin position="700"/>
        <end position="705"/>
    </location>
</feature>
<feature type="strand" evidence="5">
    <location>
        <begin position="712"/>
        <end position="720"/>
    </location>
</feature>
<feature type="strand" evidence="5">
    <location>
        <begin position="735"/>
        <end position="744"/>
    </location>
</feature>
<feature type="strand" evidence="5">
    <location>
        <begin position="748"/>
        <end position="759"/>
    </location>
</feature>
<proteinExistence type="evidence at protein level"/>
<protein>
    <recommendedName>
        <fullName>Endoglucanase</fullName>
        <ecNumber>3.2.1.4</ecNumber>
    </recommendedName>
    <alternativeName>
        <fullName>Alkaline cellulase</fullName>
    </alternativeName>
    <alternativeName>
        <fullName>Endo-1,4-beta-glucanase</fullName>
    </alternativeName>
</protein>
<dbReference type="EC" id="3.2.1.4"/>
<dbReference type="EMBL" id="M15743">
    <property type="protein sequence ID" value="AAA22305.1"/>
    <property type="molecule type" value="Genomic_DNA"/>
</dbReference>
<dbReference type="EMBL" id="D00066">
    <property type="protein sequence ID" value="BAA00045.1"/>
    <property type="molecule type" value="Genomic_DNA"/>
</dbReference>
<dbReference type="PIR" id="A29003">
    <property type="entry name" value="A29003"/>
</dbReference>
<dbReference type="PDB" id="1UWW">
    <property type="method" value="X-ray"/>
    <property type="resolution" value="1.40 A"/>
    <property type="chains" value="A/B=571-761"/>
</dbReference>
<dbReference type="PDBsum" id="1UWW"/>
<dbReference type="SMR" id="P06564"/>
<dbReference type="STRING" id="1236973.JCM9157_4362"/>
<dbReference type="CAZy" id="CBM17">
    <property type="family name" value="Carbohydrate-Binding Module Family 17"/>
</dbReference>
<dbReference type="CAZy" id="CBM28">
    <property type="family name" value="Carbohydrate-Binding Module Family 28"/>
</dbReference>
<dbReference type="CAZy" id="GH5">
    <property type="family name" value="Glycoside Hydrolase Family 5"/>
</dbReference>
<dbReference type="eggNOG" id="COG2730">
    <property type="taxonomic scope" value="Bacteria"/>
</dbReference>
<dbReference type="EvolutionaryTrace" id="P06564"/>
<dbReference type="GO" id="GO:0008810">
    <property type="term" value="F:cellulase activity"/>
    <property type="evidence" value="ECO:0007669"/>
    <property type="project" value="UniProtKB-EC"/>
</dbReference>
<dbReference type="GO" id="GO:0030245">
    <property type="term" value="P:cellulose catabolic process"/>
    <property type="evidence" value="ECO:0007669"/>
    <property type="project" value="UniProtKB-KW"/>
</dbReference>
<dbReference type="Gene3D" id="2.60.120.260">
    <property type="entry name" value="Galactose-binding domain-like"/>
    <property type="match status" value="2"/>
</dbReference>
<dbReference type="Gene3D" id="3.20.20.80">
    <property type="entry name" value="Glycosidases"/>
    <property type="match status" value="1"/>
</dbReference>
<dbReference type="InterPro" id="IPR005086">
    <property type="entry name" value="CBM17/28"/>
</dbReference>
<dbReference type="InterPro" id="IPR008979">
    <property type="entry name" value="Galactose-bd-like_sf"/>
</dbReference>
<dbReference type="InterPro" id="IPR001547">
    <property type="entry name" value="Glyco_hydro_5"/>
</dbReference>
<dbReference type="InterPro" id="IPR018087">
    <property type="entry name" value="Glyco_hydro_5_CS"/>
</dbReference>
<dbReference type="InterPro" id="IPR017853">
    <property type="entry name" value="Glycoside_hydrolase_SF"/>
</dbReference>
<dbReference type="PANTHER" id="PTHR34142">
    <property type="entry name" value="ENDO-BETA-1,4-GLUCANASE A"/>
    <property type="match status" value="1"/>
</dbReference>
<dbReference type="PANTHER" id="PTHR34142:SF1">
    <property type="entry name" value="GLYCOSIDE HYDROLASE FAMILY 5 DOMAIN-CONTAINING PROTEIN"/>
    <property type="match status" value="1"/>
</dbReference>
<dbReference type="Pfam" id="PF03424">
    <property type="entry name" value="CBM_17_28"/>
    <property type="match status" value="2"/>
</dbReference>
<dbReference type="Pfam" id="PF00150">
    <property type="entry name" value="Cellulase"/>
    <property type="match status" value="1"/>
</dbReference>
<dbReference type="SUPFAM" id="SSF51445">
    <property type="entry name" value="(Trans)glycosidases"/>
    <property type="match status" value="1"/>
</dbReference>
<dbReference type="SUPFAM" id="SSF49785">
    <property type="entry name" value="Galactose-binding domain-like"/>
    <property type="match status" value="2"/>
</dbReference>
<dbReference type="PROSITE" id="PS00659">
    <property type="entry name" value="GLYCOSYL_HYDROL_F5"/>
    <property type="match status" value="1"/>
</dbReference>
<organism>
    <name type="scientific">Halalkalibacter akibai (strain ATCC 43226 / DSM 21942 / CIP 109018 / JCM 9157 / 1139)</name>
    <name type="common">Bacillus akibai</name>
    <dbReference type="NCBI Taxonomy" id="1236973"/>
    <lineage>
        <taxon>Bacteria</taxon>
        <taxon>Bacillati</taxon>
        <taxon>Bacillota</taxon>
        <taxon>Bacilli</taxon>
        <taxon>Bacillales</taxon>
        <taxon>Bacillaceae</taxon>
        <taxon>Halalkalibacter</taxon>
    </lineage>
</organism>
<keyword id="KW-0002">3D-structure</keyword>
<keyword id="KW-0119">Carbohydrate metabolism</keyword>
<keyword id="KW-0136">Cellulose degradation</keyword>
<keyword id="KW-0326">Glycosidase</keyword>
<keyword id="KW-0378">Hydrolase</keyword>
<keyword id="KW-0624">Polysaccharide degradation</keyword>
<keyword id="KW-0732">Signal</keyword>
<name>GUN_HALA3</name>
<evidence type="ECO:0000250" key="1">
    <source>
        <dbReference type="UniProtKB" id="O85465"/>
    </source>
</evidence>
<evidence type="ECO:0000255" key="2"/>
<evidence type="ECO:0000256" key="3">
    <source>
        <dbReference type="SAM" id="MobiDB-lite"/>
    </source>
</evidence>
<evidence type="ECO:0000305" key="4"/>
<evidence type="ECO:0007829" key="5">
    <source>
        <dbReference type="PDB" id="1UWW"/>
    </source>
</evidence>
<sequence>MMLRKKTKQLISSILILVLLLSLFPTALAAEGNTREDNFKHLLGNDNVKRPSEAGALQLQEVDGQMTLVDQHGEKIQLRGMSTHGLQWFPEILNDNAYKALANDWESNMIRLAMYVGENGYASNPELIKSRVIKGIDLAIENDMYVIVDWHVHAPGDPRDPVYAGAEDFFRDIAALYPNNPHIIYELANEPSSNNNGGAGIPNNEEGWNAVKEYADPIVEMLRDSGNADDNIIIVGSPNWSQRPDLAADNPIDDHHTMYTVHFYTGSHAASTESYPPETPNSERGNVMSNTRYALENGVAVFATEWGTSQANGDGGPYFDEADVWIEFLNENNISWANWSLTNKNEVSGAFTPFELGKSNATSLDPGPDQVWVPEELSLSGEYVRARIKGVNYEPIDRTKYTKVLWDFNDGTKQGFGVNGDSPVEDVVIENEAGALKLSGLDASNDVSEGNYWANARLSADGWGKSVDILGAEKLTMDVIVDEPTTVSIAAIPQGPSANWVNPNRAIKVEPTNFVPLEDKFKAELTITSADSPSLEAIAMHAENNNINNIILFVGTEGADVIYLDNIKVIGTEVEIPVVHDPKGEAVLPSVFEDGTRQGWDWAGESGVKTALTIEEANGSNALSWEFGYPEVKPSDNWATAPRLDFWKSDLVRGENDYVTFDFYLDPVRATEGAMNINLVFQPPTNGYWVQAPKTYTINFDELEEPNQVNGLYHYEVKINVRDITNIQDDTLLRNMMIIFADVESDFAGRVFVDNVRFEGAATTEPVEPEPVDPGEETPPVDEKEAKTEQKEAEKEEKEE</sequence>
<comment type="catalytic activity">
    <reaction>
        <text>Endohydrolysis of (1-&gt;4)-beta-D-glucosidic linkages in cellulose, lichenin and cereal beta-D-glucans.</text>
        <dbReference type="EC" id="3.2.1.4"/>
    </reaction>
</comment>
<comment type="biophysicochemical properties">
    <phDependence>
        <text>Optimum pH is 9.0.</text>
    </phDependence>
</comment>
<comment type="miscellaneous">
    <text>Alkalophilic Bacillus sp strain 1139 is not a true cellulolytic microorganism because the enzyme is unable to hydrolyze native cellulose.</text>
</comment>
<comment type="similarity">
    <text evidence="4">Belongs to the glycosyl hydrolase 5 (cellulase A) family.</text>
</comment>
<accession>P06564</accession>